<protein>
    <recommendedName>
        <fullName>Endophilin-B1</fullName>
    </recommendedName>
    <alternativeName>
        <fullName>SH3 domain-containing GRB2-like protein B1</fullName>
    </alternativeName>
</protein>
<feature type="chain" id="PRO_0000146754" description="Endophilin-B1">
    <location>
        <begin position="1"/>
        <end position="365"/>
    </location>
</feature>
<feature type="domain" description="BAR" evidence="6">
    <location>
        <begin position="27"/>
        <end position="261"/>
    </location>
</feature>
<feature type="domain" description="SH3" evidence="5">
    <location>
        <begin position="305"/>
        <end position="365"/>
    </location>
</feature>
<feature type="region of interest" description="Required for membrane binding" evidence="3">
    <location>
        <begin position="1"/>
        <end position="37"/>
    </location>
</feature>
<feature type="region of interest" description="Membrane-binding amphipathic helix" evidence="1">
    <location>
        <begin position="1"/>
        <end position="30"/>
    </location>
</feature>
<feature type="coiled-coil region" evidence="4">
    <location>
        <begin position="155"/>
        <end position="186"/>
    </location>
</feature>
<feature type="modified residue" description="N-acetylmethionine" evidence="3">
    <location>
        <position position="1"/>
    </location>
</feature>
<feature type="modified residue" description="Phosphothreonine; by CDK5" evidence="3">
    <location>
        <position position="145"/>
    </location>
</feature>
<feature type="splice variant" id="VSP_009277" description="In isoform 2." evidence="12">
    <original>S</original>
    <variation>SQLNSARPEGDNIMIWAEEVTK</variation>
    <location>
        <position position="190"/>
    </location>
</feature>
<feature type="splice variant" id="VSP_058266" description="In isoform 3.">
    <location>
        <begin position="356"/>
        <end position="365"/>
    </location>
</feature>
<feature type="sequence conflict" description="In Ref. 4; BAB27575." evidence="14" ref="4">
    <original>A</original>
    <variation>T</variation>
    <location>
        <position position="159"/>
    </location>
</feature>
<feature type="strand" evidence="16">
    <location>
        <begin position="308"/>
        <end position="314"/>
    </location>
</feature>
<feature type="strand" evidence="16">
    <location>
        <begin position="331"/>
        <end position="335"/>
    </location>
</feature>
<feature type="strand" evidence="16">
    <location>
        <begin position="344"/>
        <end position="349"/>
    </location>
</feature>
<feature type="strand" evidence="16">
    <location>
        <begin position="352"/>
        <end position="357"/>
    </location>
</feature>
<feature type="helix" evidence="16">
    <location>
        <begin position="358"/>
        <end position="360"/>
    </location>
</feature>
<feature type="strand" evidence="16">
    <location>
        <begin position="361"/>
        <end position="363"/>
    </location>
</feature>
<dbReference type="EMBL" id="AF263364">
    <property type="protein sequence ID" value="AAF73438.1"/>
    <property type="molecule type" value="mRNA"/>
</dbReference>
<dbReference type="EMBL" id="AF272946">
    <property type="protein sequence ID" value="AAL59846.1"/>
    <property type="molecule type" value="mRNA"/>
</dbReference>
<dbReference type="EMBL" id="DQ205686">
    <property type="protein sequence ID" value="ABA54268.1"/>
    <property type="molecule type" value="mRNA"/>
</dbReference>
<dbReference type="EMBL" id="AK172959">
    <property type="protein sequence ID" value="BAD32237.1"/>
    <property type="status" value="ALT_INIT"/>
    <property type="molecule type" value="mRNA"/>
</dbReference>
<dbReference type="EMBL" id="AK029647">
    <property type="protein sequence ID" value="BAC26545.1"/>
    <property type="molecule type" value="mRNA"/>
</dbReference>
<dbReference type="EMBL" id="AK011371">
    <property type="protein sequence ID" value="BAB27575.3"/>
    <property type="molecule type" value="mRNA"/>
</dbReference>
<dbReference type="EMBL" id="AK158415">
    <property type="protein sequence ID" value="BAE34495.1"/>
    <property type="molecule type" value="mRNA"/>
</dbReference>
<dbReference type="EMBL" id="AC134404">
    <property type="status" value="NOT_ANNOTATED_CDS"/>
    <property type="molecule type" value="Genomic_DNA"/>
</dbReference>
<dbReference type="EMBL" id="BC024362">
    <property type="protein sequence ID" value="AAH24362.1"/>
    <property type="molecule type" value="mRNA"/>
</dbReference>
<dbReference type="CCDS" id="CCDS17885.1">
    <molecule id="Q9JK48-1"/>
</dbReference>
<dbReference type="CCDS" id="CCDS80042.1">
    <molecule id="Q9JK48-3"/>
</dbReference>
<dbReference type="CCDS" id="CCDS80043.1">
    <molecule id="Q9JK48-2"/>
</dbReference>
<dbReference type="RefSeq" id="NP_001268966.1">
    <molecule id="Q9JK48-2"/>
    <property type="nucleotide sequence ID" value="NM_001282037.1"/>
</dbReference>
<dbReference type="RefSeq" id="NP_001268971.1">
    <molecule id="Q9JK48-3"/>
    <property type="nucleotide sequence ID" value="NM_001282042.1"/>
</dbReference>
<dbReference type="RefSeq" id="NP_062337.1">
    <molecule id="Q9JK48-1"/>
    <property type="nucleotide sequence ID" value="NM_019464.3"/>
</dbReference>
<dbReference type="PDB" id="1X43">
    <property type="method" value="NMR"/>
    <property type="chains" value="A=298-365"/>
</dbReference>
<dbReference type="PDBsum" id="1X43"/>
<dbReference type="SMR" id="Q9JK48"/>
<dbReference type="BioGRID" id="207716">
    <property type="interactions" value="7"/>
</dbReference>
<dbReference type="FunCoup" id="Q9JK48">
    <property type="interactions" value="3182"/>
</dbReference>
<dbReference type="IntAct" id="Q9JK48">
    <property type="interactions" value="2"/>
</dbReference>
<dbReference type="STRING" id="10090.ENSMUSP00000143312"/>
<dbReference type="iPTMnet" id="Q9JK48"/>
<dbReference type="PhosphoSitePlus" id="Q9JK48"/>
<dbReference type="SwissPalm" id="Q9JK48"/>
<dbReference type="REPRODUCTION-2DPAGE" id="Q9JK48"/>
<dbReference type="jPOST" id="Q9JK48"/>
<dbReference type="PaxDb" id="10090-ENSMUSP00000129800"/>
<dbReference type="PeptideAtlas" id="Q9JK48"/>
<dbReference type="ProteomicsDB" id="257005">
    <molecule id="Q9JK48-1"/>
</dbReference>
<dbReference type="ProteomicsDB" id="257006">
    <molecule id="Q9JK48-2"/>
</dbReference>
<dbReference type="ProteomicsDB" id="257007">
    <molecule id="Q9JK48-3"/>
</dbReference>
<dbReference type="Pumba" id="Q9JK48"/>
<dbReference type="Antibodypedia" id="2824">
    <property type="antibodies" value="552 antibodies from 36 providers"/>
</dbReference>
<dbReference type="DNASU" id="54673"/>
<dbReference type="Ensembl" id="ENSMUST00000163279.6">
    <molecule id="Q9JK48-1"/>
    <property type="protein sequence ID" value="ENSMUSP00000129800.2"/>
    <property type="gene ID" value="ENSMUSG00000037062.14"/>
</dbReference>
<dbReference type="Ensembl" id="ENSMUST00000198254.5">
    <molecule id="Q9JK48-2"/>
    <property type="protein sequence ID" value="ENSMUSP00000143312.2"/>
    <property type="gene ID" value="ENSMUSG00000037062.14"/>
</dbReference>
<dbReference type="Ensembl" id="ENSMUST00000199531.5">
    <molecule id="Q9JK48-3"/>
    <property type="protein sequence ID" value="ENSMUSP00000143433.2"/>
    <property type="gene ID" value="ENSMUSG00000037062.14"/>
</dbReference>
<dbReference type="GeneID" id="54673"/>
<dbReference type="KEGG" id="mmu:54673"/>
<dbReference type="UCSC" id="uc008rpt.2">
    <molecule id="Q9JK48-1"/>
    <property type="organism name" value="mouse"/>
</dbReference>
<dbReference type="UCSC" id="uc008rpw.2">
    <molecule id="Q9JK48-2"/>
    <property type="organism name" value="mouse"/>
</dbReference>
<dbReference type="AGR" id="MGI:1859730"/>
<dbReference type="CTD" id="51100"/>
<dbReference type="MGI" id="MGI:1859730">
    <property type="gene designation" value="Sh3glb1"/>
</dbReference>
<dbReference type="VEuPathDB" id="HostDB:ENSMUSG00000037062"/>
<dbReference type="eggNOG" id="KOG3725">
    <property type="taxonomic scope" value="Eukaryota"/>
</dbReference>
<dbReference type="GeneTree" id="ENSGT00940000155667"/>
<dbReference type="HOGENOM" id="CLU_043817_1_1_1"/>
<dbReference type="InParanoid" id="Q9JK48"/>
<dbReference type="PhylomeDB" id="Q9JK48"/>
<dbReference type="TreeFam" id="TF313281"/>
<dbReference type="BioGRID-ORCS" id="54673">
    <property type="hits" value="2 hits in 78 CRISPR screens"/>
</dbReference>
<dbReference type="ChiTaRS" id="Sh3glb1">
    <property type="organism name" value="mouse"/>
</dbReference>
<dbReference type="EvolutionaryTrace" id="Q9JK48"/>
<dbReference type="PRO" id="PR:Q9JK48"/>
<dbReference type="Proteomes" id="UP000000589">
    <property type="component" value="Chromosome 3"/>
</dbReference>
<dbReference type="RNAct" id="Q9JK48">
    <property type="molecule type" value="protein"/>
</dbReference>
<dbReference type="Bgee" id="ENSMUSG00000037062">
    <property type="expression patterns" value="Expressed in blood and 256 other cell types or tissues"/>
</dbReference>
<dbReference type="ExpressionAtlas" id="Q9JK48">
    <property type="expression patterns" value="baseline and differential"/>
</dbReference>
<dbReference type="GO" id="GO:0000421">
    <property type="term" value="C:autophagosome membrane"/>
    <property type="evidence" value="ECO:0007669"/>
    <property type="project" value="UniProtKB-SubCell"/>
</dbReference>
<dbReference type="GO" id="GO:0031410">
    <property type="term" value="C:cytoplasmic vesicle"/>
    <property type="evidence" value="ECO:0007669"/>
    <property type="project" value="UniProtKB-KW"/>
</dbReference>
<dbReference type="GO" id="GO:0005829">
    <property type="term" value="C:cytosol"/>
    <property type="evidence" value="ECO:0000266"/>
    <property type="project" value="MGI"/>
</dbReference>
<dbReference type="GO" id="GO:0005783">
    <property type="term" value="C:endoplasmic reticulum"/>
    <property type="evidence" value="ECO:0000305"/>
    <property type="project" value="MGI"/>
</dbReference>
<dbReference type="GO" id="GO:0000139">
    <property type="term" value="C:Golgi membrane"/>
    <property type="evidence" value="ECO:0007669"/>
    <property type="project" value="UniProtKB-SubCell"/>
</dbReference>
<dbReference type="GO" id="GO:0016020">
    <property type="term" value="C:membrane"/>
    <property type="evidence" value="ECO:0000314"/>
    <property type="project" value="MGI"/>
</dbReference>
<dbReference type="GO" id="GO:0030496">
    <property type="term" value="C:midbody"/>
    <property type="evidence" value="ECO:0007669"/>
    <property type="project" value="UniProtKB-SubCell"/>
</dbReference>
<dbReference type="GO" id="GO:0005740">
    <property type="term" value="C:mitochondrial envelope"/>
    <property type="evidence" value="ECO:0000266"/>
    <property type="project" value="MGI"/>
</dbReference>
<dbReference type="GO" id="GO:0005741">
    <property type="term" value="C:mitochondrial outer membrane"/>
    <property type="evidence" value="ECO:0007669"/>
    <property type="project" value="UniProtKB-SubCell"/>
</dbReference>
<dbReference type="GO" id="GO:0016604">
    <property type="term" value="C:nuclear body"/>
    <property type="evidence" value="ECO:0007669"/>
    <property type="project" value="Ensembl"/>
</dbReference>
<dbReference type="GO" id="GO:0032991">
    <property type="term" value="C:protein-containing complex"/>
    <property type="evidence" value="ECO:0000314"/>
    <property type="project" value="MGI"/>
</dbReference>
<dbReference type="GO" id="GO:0005504">
    <property type="term" value="F:fatty acid binding"/>
    <property type="evidence" value="ECO:0000314"/>
    <property type="project" value="MGI"/>
</dbReference>
<dbReference type="GO" id="GO:0042171">
    <property type="term" value="F:lysophosphatidic acid acyltransferase activity"/>
    <property type="evidence" value="ECO:0000314"/>
    <property type="project" value="MGI"/>
</dbReference>
<dbReference type="GO" id="GO:0141038">
    <property type="term" value="F:phosphatidylinositol 3-kinase activator activity"/>
    <property type="evidence" value="ECO:0000315"/>
    <property type="project" value="UniProtKB"/>
</dbReference>
<dbReference type="GO" id="GO:0042803">
    <property type="term" value="F:protein homodimerization activity"/>
    <property type="evidence" value="ECO:0007669"/>
    <property type="project" value="Ensembl"/>
</dbReference>
<dbReference type="GO" id="GO:0051084">
    <property type="term" value="P:'de novo' post-translational protein folding"/>
    <property type="evidence" value="ECO:0000314"/>
    <property type="project" value="MGI"/>
</dbReference>
<dbReference type="GO" id="GO:0006915">
    <property type="term" value="P:apoptotic process"/>
    <property type="evidence" value="ECO:0000315"/>
    <property type="project" value="MGI"/>
</dbReference>
<dbReference type="GO" id="GO:0048102">
    <property type="term" value="P:autophagic cell death"/>
    <property type="evidence" value="ECO:0000315"/>
    <property type="project" value="UniProtKB"/>
</dbReference>
<dbReference type="GO" id="GO:0034198">
    <property type="term" value="P:cellular response to amino acid starvation"/>
    <property type="evidence" value="ECO:0007669"/>
    <property type="project" value="Ensembl"/>
</dbReference>
<dbReference type="GO" id="GO:0042149">
    <property type="term" value="P:cellular response to glucose starvation"/>
    <property type="evidence" value="ECO:0007669"/>
    <property type="project" value="Ensembl"/>
</dbReference>
<dbReference type="GO" id="GO:0090148">
    <property type="term" value="P:membrane fission"/>
    <property type="evidence" value="ECO:0007669"/>
    <property type="project" value="Ensembl"/>
</dbReference>
<dbReference type="GO" id="GO:0007005">
    <property type="term" value="P:mitochondrion organization"/>
    <property type="evidence" value="ECO:0000315"/>
    <property type="project" value="UniProtKB"/>
</dbReference>
<dbReference type="GO" id="GO:1902254">
    <property type="term" value="P:negative regulation of intrinsic apoptotic signaling pathway by p53 class mediator"/>
    <property type="evidence" value="ECO:0000315"/>
    <property type="project" value="UniProtKB"/>
</dbReference>
<dbReference type="GO" id="GO:0006654">
    <property type="term" value="P:phosphatidic acid biosynthetic process"/>
    <property type="evidence" value="ECO:0000314"/>
    <property type="project" value="MGI"/>
</dbReference>
<dbReference type="GO" id="GO:0008654">
    <property type="term" value="P:phospholipid biosynthetic process"/>
    <property type="evidence" value="ECO:0000314"/>
    <property type="project" value="MGI"/>
</dbReference>
<dbReference type="GO" id="GO:2000786">
    <property type="term" value="P:positive regulation of autophagosome assembly"/>
    <property type="evidence" value="ECO:0000315"/>
    <property type="project" value="UniProtKB"/>
</dbReference>
<dbReference type="GO" id="GO:0010508">
    <property type="term" value="P:positive regulation of autophagy"/>
    <property type="evidence" value="ECO:0000315"/>
    <property type="project" value="UniProtKB"/>
</dbReference>
<dbReference type="GO" id="GO:1903749">
    <property type="term" value="P:positive regulation of establishment of protein localization to mitochondrion"/>
    <property type="evidence" value="ECO:0000315"/>
    <property type="project" value="MGI"/>
</dbReference>
<dbReference type="GO" id="GO:1902255">
    <property type="term" value="P:positive regulation of intrinsic apoptotic signaling pathway by p53 class mediator"/>
    <property type="evidence" value="ECO:0000314"/>
    <property type="project" value="UniProtKB"/>
</dbReference>
<dbReference type="GO" id="GO:1903527">
    <property type="term" value="P:positive regulation of membrane tubulation"/>
    <property type="evidence" value="ECO:0007669"/>
    <property type="project" value="Ensembl"/>
</dbReference>
<dbReference type="GO" id="GO:0031334">
    <property type="term" value="P:positive regulation of protein-containing complex assembly"/>
    <property type="evidence" value="ECO:0007669"/>
    <property type="project" value="Ensembl"/>
</dbReference>
<dbReference type="GO" id="GO:1903778">
    <property type="term" value="P:protein localization to vacuolar membrane"/>
    <property type="evidence" value="ECO:0000315"/>
    <property type="project" value="UniProtKB"/>
</dbReference>
<dbReference type="GO" id="GO:0032801">
    <property type="term" value="P:receptor catabolic process"/>
    <property type="evidence" value="ECO:0007669"/>
    <property type="project" value="Ensembl"/>
</dbReference>
<dbReference type="GO" id="GO:0032465">
    <property type="term" value="P:regulation of cytokinesis"/>
    <property type="evidence" value="ECO:0007669"/>
    <property type="project" value="Ensembl"/>
</dbReference>
<dbReference type="CDD" id="cd07616">
    <property type="entry name" value="BAR_Endophilin_B1"/>
    <property type="match status" value="1"/>
</dbReference>
<dbReference type="CDD" id="cd11945">
    <property type="entry name" value="SH3_Endophilin_B1"/>
    <property type="match status" value="1"/>
</dbReference>
<dbReference type="FunFam" id="1.20.1270.60:FF:000017">
    <property type="entry name" value="endophilin-B2 isoform X1"/>
    <property type="match status" value="1"/>
</dbReference>
<dbReference type="FunFam" id="2.30.30.40:FF:000028">
    <property type="entry name" value="endophilin-B2 isoform X1"/>
    <property type="match status" value="1"/>
</dbReference>
<dbReference type="Gene3D" id="1.20.1270.60">
    <property type="entry name" value="Arfaptin homology (AH) domain/BAR domain"/>
    <property type="match status" value="1"/>
</dbReference>
<dbReference type="Gene3D" id="2.30.30.40">
    <property type="entry name" value="SH3 Domains"/>
    <property type="match status" value="1"/>
</dbReference>
<dbReference type="InterPro" id="IPR027267">
    <property type="entry name" value="AH/BAR_dom_sf"/>
</dbReference>
<dbReference type="InterPro" id="IPR004148">
    <property type="entry name" value="BAR_dom"/>
</dbReference>
<dbReference type="InterPro" id="IPR050384">
    <property type="entry name" value="Endophilin_SH3RF"/>
</dbReference>
<dbReference type="InterPro" id="IPR036028">
    <property type="entry name" value="SH3-like_dom_sf"/>
</dbReference>
<dbReference type="InterPro" id="IPR001452">
    <property type="entry name" value="SH3_domain"/>
</dbReference>
<dbReference type="InterPro" id="IPR035695">
    <property type="entry name" value="SH3GLB1_BAR"/>
</dbReference>
<dbReference type="InterPro" id="IPR028503">
    <property type="entry name" value="SH3GLB_SH3"/>
</dbReference>
<dbReference type="PANTHER" id="PTHR14167:SF52">
    <property type="entry name" value="ENDOPHILIN-B1"/>
    <property type="match status" value="1"/>
</dbReference>
<dbReference type="PANTHER" id="PTHR14167">
    <property type="entry name" value="SH3 DOMAIN-CONTAINING"/>
    <property type="match status" value="1"/>
</dbReference>
<dbReference type="Pfam" id="PF03114">
    <property type="entry name" value="BAR"/>
    <property type="match status" value="1"/>
</dbReference>
<dbReference type="Pfam" id="PF14604">
    <property type="entry name" value="SH3_9"/>
    <property type="match status" value="1"/>
</dbReference>
<dbReference type="SMART" id="SM00721">
    <property type="entry name" value="BAR"/>
    <property type="match status" value="1"/>
</dbReference>
<dbReference type="SMART" id="SM00326">
    <property type="entry name" value="SH3"/>
    <property type="match status" value="1"/>
</dbReference>
<dbReference type="SUPFAM" id="SSF103657">
    <property type="entry name" value="BAR/IMD domain-like"/>
    <property type="match status" value="1"/>
</dbReference>
<dbReference type="SUPFAM" id="SSF50044">
    <property type="entry name" value="SH3-domain"/>
    <property type="match status" value="1"/>
</dbReference>
<dbReference type="PROSITE" id="PS51021">
    <property type="entry name" value="BAR"/>
    <property type="match status" value="1"/>
</dbReference>
<dbReference type="PROSITE" id="PS50002">
    <property type="entry name" value="SH3"/>
    <property type="match status" value="1"/>
</dbReference>
<organism>
    <name type="scientific">Mus musculus</name>
    <name type="common">Mouse</name>
    <dbReference type="NCBI Taxonomy" id="10090"/>
    <lineage>
        <taxon>Eukaryota</taxon>
        <taxon>Metazoa</taxon>
        <taxon>Chordata</taxon>
        <taxon>Craniata</taxon>
        <taxon>Vertebrata</taxon>
        <taxon>Euteleostomi</taxon>
        <taxon>Mammalia</taxon>
        <taxon>Eutheria</taxon>
        <taxon>Euarchontoglires</taxon>
        <taxon>Glires</taxon>
        <taxon>Rodentia</taxon>
        <taxon>Myomorpha</taxon>
        <taxon>Muroidea</taxon>
        <taxon>Muridae</taxon>
        <taxon>Murinae</taxon>
        <taxon>Mus</taxon>
        <taxon>Mus</taxon>
    </lineage>
</organism>
<comment type="function">
    <text evidence="3 9 11">May be required for normal outer mitochondrial membrane dynamics. Required for coatomer-mediated retrograde transport in certain cells (PubMed:17086176). May recruit other proteins to membranes with high curvature. May promote membrane fusion (By similarity). Involved in activation of caspase-dependent apoptosis by promoting BAX/BAK1 activation (PubMed:16227588). Isoform 1 acts proapoptotic in fibroblasts (PubMed:24523556). Involved in caspase-independent apoptosis during nutrition starvation and involved in the regulation of autophagy. Activates lipid kinase activity of PIK3C3 during autophagy probably by associating with the PI3K complex II (PI3KC3-C2). Associated with PI3KC3-C2 during autophagy may regulate the trafficking of ATG9A from the Golgi complex to the peripheral cytoplasm for the formation of autophagosomes by inducing Golgi membrane tubulation and fragmentation. Involved in regulation of degradative endocytic trafficking and cytokinesis, probably in the context of PI3KC3-C2 (By similarity). Isoform 2 acts antiapoptotic in neuronal cells; involved in maintenance of mitochondrial morphology and promotes neuronal viability (PubMed:24523556).</text>
</comment>
<comment type="subunit">
    <text evidence="3 7 8 9 10">Homodimer, and heterodimer with SH3GLB2 (By similarity). Binds BAX; induction of apoptosis augments BAX binding (PubMed:16227588, PubMed:17381077). Binds DNM1, HTT, AMPH, BIN1 and ARFGAP1 (PubMed:12456676, PubMed:17086176). Interacts with UVRAG; UVRAG bridges the interaction to BECN1 indicative for an association with the PI3K complex II (PI3KC3-C2) (By similarity). Isoform 3 interacts with PPP1CC; this interaction leads to the inhibition of phosphatase activity (PubMed:17381077).</text>
</comment>
<comment type="subcellular location">
    <subcellularLocation>
        <location evidence="10">Cytoplasm</location>
    </subcellularLocation>
    <subcellularLocation>
        <location evidence="9">Golgi apparatus membrane</location>
        <topology evidence="2">Peripheral membrane protein</topology>
    </subcellularLocation>
    <subcellularLocation>
        <location evidence="3">Mitochondrion outer membrane</location>
        <topology evidence="3">Peripheral membrane protein</topology>
    </subcellularLocation>
    <subcellularLocation>
        <location evidence="3">Cytoplasmic vesicle</location>
        <location evidence="3">Autophagosome membrane</location>
    </subcellularLocation>
    <subcellularLocation>
        <location evidence="3">Midbody</location>
    </subcellularLocation>
    <text evidence="3">Association with the Golgi apparatus depends on the cell type. Following starvation colocalizes with ATG5 and LC3 autophagy-related protein(s)on autophagosomal membranes.</text>
</comment>
<comment type="alternative products">
    <event type="alternative splicing"/>
    <isoform>
        <id>Q9JK48-1</id>
        <name>1</name>
        <name>Endophilin B1a</name>
        <name evidence="13">Bif-1</name>
        <sequence type="displayed"/>
    </isoform>
    <isoform>
        <id>Q9JK48-2</id>
        <name>2</name>
        <name>Endophilin B1b</name>
        <sequence type="described" ref="VSP_009277"/>
    </isoform>
    <isoform>
        <id>Q9JK48-3</id>
        <name>3</name>
        <name evidence="13">Endophilin-B1t</name>
        <sequence type="described" ref="VSP_058266"/>
    </isoform>
</comment>
<comment type="tissue specificity">
    <text evidence="10">Isoform 1 is widely expressed. Isoform 2 is brain-specific. Isoform 3 is predominantly expressed in testis, but it is also detected in liver and, at much lower levels, in skin, stomach and ovary.</text>
</comment>
<comment type="domain">
    <text evidence="1">An N-terminal amphipathic helix, the BAR domain and a second amphipathic helix inserted into helix 1 of the BAR domain (N-BAR domain) induce membrane curvature and bind curved membranes.</text>
</comment>
<comment type="domain">
    <text evidence="3">The SH3 domain is required and sufficient for the interaction with UVRAG.</text>
</comment>
<comment type="PTM">
    <text evidence="1">Phosphorylated at Thr-145 by CDK5; this phosphorylation is required for autophagy induction in starved neurons and facilitates homodimerization.</text>
</comment>
<comment type="miscellaneous">
    <text>Fibroblasts with a reduced level of Sh3glb1 show a defect in retrograde transport between the Golgi apparatus and the endoplasmic reticulum.</text>
</comment>
<comment type="similarity">
    <text evidence="14">Belongs to the endophilin family.</text>
</comment>
<comment type="caution">
    <text evidence="15">Was originally thought to have lysophosphatidic acid acyltransferase activity, but by homology with SH3GL2/endophilin A1 is unlikely to have this activity.</text>
</comment>
<comment type="sequence caution" evidence="14">
    <conflict type="erroneous initiation">
        <sequence resource="EMBL-CDS" id="BAD32237"/>
    </conflict>
</comment>
<evidence type="ECO:0000250" key="1"/>
<evidence type="ECO:0000250" key="2">
    <source>
        <dbReference type="UniProtKB" id="Q6AYE2"/>
    </source>
</evidence>
<evidence type="ECO:0000250" key="3">
    <source>
        <dbReference type="UniProtKB" id="Q9Y371"/>
    </source>
</evidence>
<evidence type="ECO:0000255" key="4"/>
<evidence type="ECO:0000255" key="5">
    <source>
        <dbReference type="PROSITE-ProRule" id="PRU00192"/>
    </source>
</evidence>
<evidence type="ECO:0000255" key="6">
    <source>
        <dbReference type="PROSITE-ProRule" id="PRU00361"/>
    </source>
</evidence>
<evidence type="ECO:0000269" key="7">
    <source>
    </source>
</evidence>
<evidence type="ECO:0000269" key="8">
    <source>
    </source>
</evidence>
<evidence type="ECO:0000269" key="9">
    <source>
    </source>
</evidence>
<evidence type="ECO:0000269" key="10">
    <source>
    </source>
</evidence>
<evidence type="ECO:0000269" key="11">
    <source>
    </source>
</evidence>
<evidence type="ECO:0000303" key="12">
    <source>
    </source>
</evidence>
<evidence type="ECO:0000303" key="13">
    <source>
    </source>
</evidence>
<evidence type="ECO:0000305" key="14"/>
<evidence type="ECO:0000305" key="15">
    <source>
    </source>
</evidence>
<evidence type="ECO:0007829" key="16">
    <source>
        <dbReference type="PDB" id="1X43"/>
    </source>
</evidence>
<keyword id="KW-0002">3D-structure</keyword>
<keyword id="KW-0007">Acetylation</keyword>
<keyword id="KW-0025">Alternative splicing</keyword>
<keyword id="KW-0053">Apoptosis</keyword>
<keyword id="KW-0175">Coiled coil</keyword>
<keyword id="KW-0963">Cytoplasm</keyword>
<keyword id="KW-0968">Cytoplasmic vesicle</keyword>
<keyword id="KW-0333">Golgi apparatus</keyword>
<keyword id="KW-0446">Lipid-binding</keyword>
<keyword id="KW-0472">Membrane</keyword>
<keyword id="KW-0496">Mitochondrion</keyword>
<keyword id="KW-1000">Mitochondrion outer membrane</keyword>
<keyword id="KW-0597">Phosphoprotein</keyword>
<keyword id="KW-1185">Reference proteome</keyword>
<keyword id="KW-0728">SH3 domain</keyword>
<name>SHLB1_MOUSE</name>
<proteinExistence type="evidence at protein level"/>
<gene>
    <name type="primary">Sh3glb1</name>
    <name type="synonym">Kiaa0491</name>
</gene>
<sequence>MNIMDFNVKKLAADAGTFLSRAVQFTEEKLGQAEKTELDAHLENLLSKAECTKIWTEKIMKQTEVLLQPNPNARIEEFVYEKLDRKAPSRINNPELLGQYMIDAGTEFGPGTAYGNALIKCGETQKRIGTADRELIQTSALNFLTPLRNFIEGDYKTIAKERKLLQNKRLDLDAAKTRLKKAKAAETKSSSEQELRITQSEFDRQAEITRLLLEGISSTHAHHLRCLNDFVEAQMTYYAQCYQYMLDLQKQLGSFPSNYLSNNNQTSGTPVPYALSNAIGPSAQASTGSLVITCPSNLNDLKESSNNRKARVLYDYDAANSTELSLLADEVITVFSVVGMDSDWLMGERGNQKGKVPITYLELLN</sequence>
<accession>Q9JK48</accession>
<accession>Q3TYR7</accession>
<accession>Q6A059</accession>
<accession>Q8CDS9</accession>
<accession>Q8VI52</accession>
<accession>Q9CT31</accession>
<reference key="1">
    <citation type="journal article" date="2003" name="J. Biol. Chem.">
        <title>Characterization of endophilin B1b, a brain-specific membrane-associated lysophosphatidic acid acyl transferase with properties distinct from endophilin A1.</title>
        <authorList>
            <person name="Modregger J."/>
            <person name="Schmidt A.A."/>
            <person name="Ritter B."/>
            <person name="Huttner W.B."/>
            <person name="Plomann M."/>
        </authorList>
    </citation>
    <scope>NUCLEOTIDE SEQUENCE [MRNA] (ISOFORMS 1 AND 2)</scope>
    <scope>INTERACTION WITH DNM1; HTT; BIN1 AND AMPH</scope>
    <scope>SUBCELLULAR LOCATION</scope>
    <source>
        <strain>BALB/cJ</strain>
        <tissue>Embryo</tissue>
    </source>
</reference>
<reference key="2">
    <citation type="journal article" date="2007" name="Biochemistry">
        <title>A testis specific isoform of endophilin B1, endophilin B1t, interacts specifically with protein phosphatase-1c gamma2 in mouse testis and is abnormally expressed in PP1c gamma null mice.</title>
        <authorList>
            <person name="Hrabchak C."/>
            <person name="Henderson H."/>
            <person name="Varmuza S."/>
        </authorList>
    </citation>
    <scope>NUCLEOTIDE SEQUENCE [MRNA] (ISOFORM 3)</scope>
    <scope>TISSUE SPECIFICITY</scope>
    <scope>INTERACTION WITH BAX AND PPP1CC</scope>
    <scope>SUBCELLULAR LOCATION</scope>
    <source>
        <strain>CD-1</strain>
    </source>
</reference>
<reference key="3">
    <citation type="journal article" date="2004" name="DNA Res.">
        <title>Prediction of the coding sequences of mouse homologues of KIAA gene: IV. The complete nucleotide sequences of 500 mouse KIAA-homologous cDNAs identified by screening of terminal sequences of cDNA clones randomly sampled from size-fractionated libraries.</title>
        <authorList>
            <person name="Okazaki N."/>
            <person name="Kikuno R."/>
            <person name="Ohara R."/>
            <person name="Inamoto S."/>
            <person name="Koseki H."/>
            <person name="Hiraoka S."/>
            <person name="Saga Y."/>
            <person name="Seino S."/>
            <person name="Nishimura M."/>
            <person name="Kaisho T."/>
            <person name="Hoshino K."/>
            <person name="Kitamura H."/>
            <person name="Nagase T."/>
            <person name="Ohara O."/>
            <person name="Koga H."/>
        </authorList>
    </citation>
    <scope>NUCLEOTIDE SEQUENCE [LARGE SCALE MRNA] (ISOFORM 1)</scope>
    <source>
        <tissue>Natural killer cell</tissue>
    </source>
</reference>
<reference key="4">
    <citation type="journal article" date="2005" name="Science">
        <title>The transcriptional landscape of the mammalian genome.</title>
        <authorList>
            <person name="Carninci P."/>
            <person name="Kasukawa T."/>
            <person name="Katayama S."/>
            <person name="Gough J."/>
            <person name="Frith M.C."/>
            <person name="Maeda N."/>
            <person name="Oyama R."/>
            <person name="Ravasi T."/>
            <person name="Lenhard B."/>
            <person name="Wells C."/>
            <person name="Kodzius R."/>
            <person name="Shimokawa K."/>
            <person name="Bajic V.B."/>
            <person name="Brenner S.E."/>
            <person name="Batalov S."/>
            <person name="Forrest A.R."/>
            <person name="Zavolan M."/>
            <person name="Davis M.J."/>
            <person name="Wilming L.G."/>
            <person name="Aidinis V."/>
            <person name="Allen J.E."/>
            <person name="Ambesi-Impiombato A."/>
            <person name="Apweiler R."/>
            <person name="Aturaliya R.N."/>
            <person name="Bailey T.L."/>
            <person name="Bansal M."/>
            <person name="Baxter L."/>
            <person name="Beisel K.W."/>
            <person name="Bersano T."/>
            <person name="Bono H."/>
            <person name="Chalk A.M."/>
            <person name="Chiu K.P."/>
            <person name="Choudhary V."/>
            <person name="Christoffels A."/>
            <person name="Clutterbuck D.R."/>
            <person name="Crowe M.L."/>
            <person name="Dalla E."/>
            <person name="Dalrymple B.P."/>
            <person name="de Bono B."/>
            <person name="Della Gatta G."/>
            <person name="di Bernardo D."/>
            <person name="Down T."/>
            <person name="Engstrom P."/>
            <person name="Fagiolini M."/>
            <person name="Faulkner G."/>
            <person name="Fletcher C.F."/>
            <person name="Fukushima T."/>
            <person name="Furuno M."/>
            <person name="Futaki S."/>
            <person name="Gariboldi M."/>
            <person name="Georgii-Hemming P."/>
            <person name="Gingeras T.R."/>
            <person name="Gojobori T."/>
            <person name="Green R.E."/>
            <person name="Gustincich S."/>
            <person name="Harbers M."/>
            <person name="Hayashi Y."/>
            <person name="Hensch T.K."/>
            <person name="Hirokawa N."/>
            <person name="Hill D."/>
            <person name="Huminiecki L."/>
            <person name="Iacono M."/>
            <person name="Ikeo K."/>
            <person name="Iwama A."/>
            <person name="Ishikawa T."/>
            <person name="Jakt M."/>
            <person name="Kanapin A."/>
            <person name="Katoh M."/>
            <person name="Kawasawa Y."/>
            <person name="Kelso J."/>
            <person name="Kitamura H."/>
            <person name="Kitano H."/>
            <person name="Kollias G."/>
            <person name="Krishnan S.P."/>
            <person name="Kruger A."/>
            <person name="Kummerfeld S.K."/>
            <person name="Kurochkin I.V."/>
            <person name="Lareau L.F."/>
            <person name="Lazarevic D."/>
            <person name="Lipovich L."/>
            <person name="Liu J."/>
            <person name="Liuni S."/>
            <person name="McWilliam S."/>
            <person name="Madan Babu M."/>
            <person name="Madera M."/>
            <person name="Marchionni L."/>
            <person name="Matsuda H."/>
            <person name="Matsuzawa S."/>
            <person name="Miki H."/>
            <person name="Mignone F."/>
            <person name="Miyake S."/>
            <person name="Morris K."/>
            <person name="Mottagui-Tabar S."/>
            <person name="Mulder N."/>
            <person name="Nakano N."/>
            <person name="Nakauchi H."/>
            <person name="Ng P."/>
            <person name="Nilsson R."/>
            <person name="Nishiguchi S."/>
            <person name="Nishikawa S."/>
            <person name="Nori F."/>
            <person name="Ohara O."/>
            <person name="Okazaki Y."/>
            <person name="Orlando V."/>
            <person name="Pang K.C."/>
            <person name="Pavan W.J."/>
            <person name="Pavesi G."/>
            <person name="Pesole G."/>
            <person name="Petrovsky N."/>
            <person name="Piazza S."/>
            <person name="Reed J."/>
            <person name="Reid J.F."/>
            <person name="Ring B.Z."/>
            <person name="Ringwald M."/>
            <person name="Rost B."/>
            <person name="Ruan Y."/>
            <person name="Salzberg S.L."/>
            <person name="Sandelin A."/>
            <person name="Schneider C."/>
            <person name="Schoenbach C."/>
            <person name="Sekiguchi K."/>
            <person name="Semple C.A."/>
            <person name="Seno S."/>
            <person name="Sessa L."/>
            <person name="Sheng Y."/>
            <person name="Shibata Y."/>
            <person name="Shimada H."/>
            <person name="Shimada K."/>
            <person name="Silva D."/>
            <person name="Sinclair B."/>
            <person name="Sperling S."/>
            <person name="Stupka E."/>
            <person name="Sugiura K."/>
            <person name="Sultana R."/>
            <person name="Takenaka Y."/>
            <person name="Taki K."/>
            <person name="Tammoja K."/>
            <person name="Tan S.L."/>
            <person name="Tang S."/>
            <person name="Taylor M.S."/>
            <person name="Tegner J."/>
            <person name="Teichmann S.A."/>
            <person name="Ueda H.R."/>
            <person name="van Nimwegen E."/>
            <person name="Verardo R."/>
            <person name="Wei C.L."/>
            <person name="Yagi K."/>
            <person name="Yamanishi H."/>
            <person name="Zabarovsky E."/>
            <person name="Zhu S."/>
            <person name="Zimmer A."/>
            <person name="Hide W."/>
            <person name="Bult C."/>
            <person name="Grimmond S.M."/>
            <person name="Teasdale R.D."/>
            <person name="Liu E.T."/>
            <person name="Brusic V."/>
            <person name="Quackenbush J."/>
            <person name="Wahlestedt C."/>
            <person name="Mattick J.S."/>
            <person name="Hume D.A."/>
            <person name="Kai C."/>
            <person name="Sasaki D."/>
            <person name="Tomaru Y."/>
            <person name="Fukuda S."/>
            <person name="Kanamori-Katayama M."/>
            <person name="Suzuki M."/>
            <person name="Aoki J."/>
            <person name="Arakawa T."/>
            <person name="Iida J."/>
            <person name="Imamura K."/>
            <person name="Itoh M."/>
            <person name="Kato T."/>
            <person name="Kawaji H."/>
            <person name="Kawagashira N."/>
            <person name="Kawashima T."/>
            <person name="Kojima M."/>
            <person name="Kondo S."/>
            <person name="Konno H."/>
            <person name="Nakano K."/>
            <person name="Ninomiya N."/>
            <person name="Nishio T."/>
            <person name="Okada M."/>
            <person name="Plessy C."/>
            <person name="Shibata K."/>
            <person name="Shiraki T."/>
            <person name="Suzuki S."/>
            <person name="Tagami M."/>
            <person name="Waki K."/>
            <person name="Watahiki A."/>
            <person name="Okamura-Oho Y."/>
            <person name="Suzuki H."/>
            <person name="Kawai J."/>
            <person name="Hayashizaki Y."/>
        </authorList>
    </citation>
    <scope>NUCLEOTIDE SEQUENCE [LARGE SCALE MRNA] (ISOFORMS 1 AND 3)</scope>
    <source>
        <strain>C57BL/6J</strain>
        <tissue>Embryo</tissue>
        <tissue>Inner ear</tissue>
        <tissue>Testis</tissue>
    </source>
</reference>
<reference key="5">
    <citation type="journal article" date="2009" name="PLoS Biol.">
        <title>Lineage-specific biology revealed by a finished genome assembly of the mouse.</title>
        <authorList>
            <person name="Church D.M."/>
            <person name="Goodstadt L."/>
            <person name="Hillier L.W."/>
            <person name="Zody M.C."/>
            <person name="Goldstein S."/>
            <person name="She X."/>
            <person name="Bult C.J."/>
            <person name="Agarwala R."/>
            <person name="Cherry J.L."/>
            <person name="DiCuccio M."/>
            <person name="Hlavina W."/>
            <person name="Kapustin Y."/>
            <person name="Meric P."/>
            <person name="Maglott D."/>
            <person name="Birtle Z."/>
            <person name="Marques A.C."/>
            <person name="Graves T."/>
            <person name="Zhou S."/>
            <person name="Teague B."/>
            <person name="Potamousis K."/>
            <person name="Churas C."/>
            <person name="Place M."/>
            <person name="Herschleb J."/>
            <person name="Runnheim R."/>
            <person name="Forrest D."/>
            <person name="Amos-Landgraf J."/>
            <person name="Schwartz D.C."/>
            <person name="Cheng Z."/>
            <person name="Lindblad-Toh K."/>
            <person name="Eichler E.E."/>
            <person name="Ponting C.P."/>
        </authorList>
    </citation>
    <scope>NUCLEOTIDE SEQUENCE [LARGE SCALE GENOMIC DNA]</scope>
    <source>
        <strain>C57BL/6J</strain>
    </source>
</reference>
<reference key="6">
    <citation type="journal article" date="2004" name="Genome Res.">
        <title>The status, quality, and expansion of the NIH full-length cDNA project: the Mammalian Gene Collection (MGC).</title>
        <authorList>
            <consortium name="The MGC Project Team"/>
        </authorList>
    </citation>
    <scope>NUCLEOTIDE SEQUENCE [LARGE SCALE MRNA] (ISOFORM 1)</scope>
    <source>
        <tissue>Mammary gland</tissue>
    </source>
</reference>
<reference key="7">
    <citation type="journal article" date="2005" name="Mol. Cell. Biol.">
        <title>Loss of Bif-1 suppresses Bax/Bak conformational change and mitochondrial apoptosis.</title>
        <authorList>
            <person name="Takahashi Y."/>
            <person name="Karbowski M."/>
            <person name="Yamaguchi H."/>
            <person name="Kazi A."/>
            <person name="Wu J."/>
            <person name="Sebti S.M."/>
            <person name="Youle R.J."/>
            <person name="Wang H.G."/>
        </authorList>
    </citation>
    <scope>FUNCTION</scope>
    <scope>INTERACTION WITH BAX</scope>
</reference>
<reference key="8">
    <citation type="journal article" date="2006" name="Nat. Cell Biol.">
        <title>Key components of the fission machinery are interchangeable.</title>
        <authorList>
            <person name="Yang J.S."/>
            <person name="Zhang L."/>
            <person name="Lee S.Y."/>
            <person name="Gad H."/>
            <person name="Luini A."/>
            <person name="Hsu V.W."/>
        </authorList>
    </citation>
    <scope>FUNCTION</scope>
    <scope>SUBCELLULAR LOCATION</scope>
    <scope>INTERACTION WITH ARFGAP1</scope>
</reference>
<reference key="9">
    <citation type="journal article" date="2010" name="Cell">
        <title>A tissue-specific atlas of mouse protein phosphorylation and expression.</title>
        <authorList>
            <person name="Huttlin E.L."/>
            <person name="Jedrychowski M.P."/>
            <person name="Elias J.E."/>
            <person name="Goswami T."/>
            <person name="Rad R."/>
            <person name="Beausoleil S.A."/>
            <person name="Villen J."/>
            <person name="Haas W."/>
            <person name="Sowa M.E."/>
            <person name="Gygi S.P."/>
        </authorList>
    </citation>
    <scope>IDENTIFICATION BY MASS SPECTROMETRY [LARGE SCALE ANALYSIS]</scope>
    <source>
        <tissue>Brain</tissue>
        <tissue>Brown adipose tissue</tissue>
        <tissue>Heart</tissue>
        <tissue>Kidney</tissue>
        <tissue>Lung</tissue>
        <tissue>Pancreas</tissue>
        <tissue>Spleen</tissue>
        <tissue>Testis</tissue>
    </source>
</reference>
<reference key="10">
    <citation type="journal article" date="2014" name="J. Neurosci.">
        <title>Bax interacting factor-1 promotes survival and mitochondrial elongation in neurons.</title>
        <authorList>
            <person name="Wang D.B."/>
            <person name="Uo T."/>
            <person name="Kinoshita C."/>
            <person name="Sopher B.L."/>
            <person name="Lee R.J."/>
            <person name="Murphy S.P."/>
            <person name="Kinoshita Y."/>
            <person name="Garden G.A."/>
            <person name="Wang H.G."/>
            <person name="Morrison R.S."/>
        </authorList>
    </citation>
    <scope>ALTERNATIVE SPLICING</scope>
    <scope>FUNCTION (ISOFORM 2)</scope>
</reference>
<reference key="11">
    <citation type="submission" date="2005-11" db="PDB data bank">
        <title>Solution structure of the SH3 domain of endophilin B1 (SH3G1B1).</title>
        <authorList>
            <consortium name="RIKEN structural genomics initiative (RSGI)"/>
        </authorList>
    </citation>
    <scope>STRUCTURE BY NMR OF 296-365</scope>
</reference>